<dbReference type="EMBL" id="U00090">
    <property type="protein sequence ID" value="AAB91786.1"/>
    <property type="molecule type" value="Genomic_DNA"/>
</dbReference>
<dbReference type="RefSeq" id="NP_443990.1">
    <property type="nucleotide sequence ID" value="NC_000914.2"/>
</dbReference>
<dbReference type="RefSeq" id="WP_010875262.1">
    <property type="nucleotide sequence ID" value="NC_000914.2"/>
</dbReference>
<dbReference type="SMR" id="P55579"/>
<dbReference type="KEGG" id="rhi:NGR_a02350"/>
<dbReference type="PATRIC" id="fig|394.7.peg.246"/>
<dbReference type="eggNOG" id="COG0451">
    <property type="taxonomic scope" value="Bacteria"/>
</dbReference>
<dbReference type="HOGENOM" id="CLU_007383_6_1_5"/>
<dbReference type="OrthoDB" id="9801785at2"/>
<dbReference type="Proteomes" id="UP000001054">
    <property type="component" value="Plasmid pNGR234a"/>
</dbReference>
<dbReference type="Gene3D" id="3.40.50.720">
    <property type="entry name" value="NAD(P)-binding Rossmann-like Domain"/>
    <property type="match status" value="1"/>
</dbReference>
<dbReference type="InterPro" id="IPR001509">
    <property type="entry name" value="Epimerase_deHydtase"/>
</dbReference>
<dbReference type="InterPro" id="IPR050177">
    <property type="entry name" value="Lipid_A_modif_metabolic_enz"/>
</dbReference>
<dbReference type="InterPro" id="IPR036291">
    <property type="entry name" value="NAD(P)-bd_dom_sf"/>
</dbReference>
<dbReference type="PANTHER" id="PTHR43245">
    <property type="entry name" value="BIFUNCTIONAL POLYMYXIN RESISTANCE PROTEIN ARNA"/>
    <property type="match status" value="1"/>
</dbReference>
<dbReference type="Pfam" id="PF01370">
    <property type="entry name" value="Epimerase"/>
    <property type="match status" value="1"/>
</dbReference>
<dbReference type="SUPFAM" id="SSF51735">
    <property type="entry name" value="NAD(P)-binding Rossmann-fold domains"/>
    <property type="match status" value="1"/>
</dbReference>
<evidence type="ECO:0000305" key="1"/>
<comment type="function">
    <text>Putative nucleotide sugar epimerase/dehydrogenase.</text>
</comment>
<comment type="cofactor">
    <cofactor>
        <name>NAD(+)</name>
        <dbReference type="ChEBI" id="CHEBI:57540"/>
    </cofactor>
    <cofactor>
        <name>NADP(+)</name>
        <dbReference type="ChEBI" id="CHEBI:58349"/>
    </cofactor>
</comment>
<comment type="similarity">
    <text evidence="1">Belongs to the NAD(P)-dependent epimerase/dehydratase family.</text>
</comment>
<keyword id="KW-0520">NAD</keyword>
<keyword id="KW-0614">Plasmid</keyword>
<keyword id="KW-1185">Reference proteome</keyword>
<gene>
    <name type="ordered locus">NGR_a02350</name>
    <name type="ORF">y4nG</name>
</gene>
<geneLocation type="plasmid">
    <name>sym pNGR234a</name>
</geneLocation>
<proteinExistence type="inferred from homology"/>
<accession>P55579</accession>
<name>Y4NG_SINFN</name>
<reference key="1">
    <citation type="journal article" date="1997" name="Nature">
        <title>Molecular basis of symbiosis between Rhizobium and legumes.</title>
        <authorList>
            <person name="Freiberg C.A."/>
            <person name="Fellay R."/>
            <person name="Bairoch A."/>
            <person name="Broughton W.J."/>
            <person name="Rosenthal A."/>
            <person name="Perret X."/>
        </authorList>
    </citation>
    <scope>NUCLEOTIDE SEQUENCE [LARGE SCALE GENOMIC DNA]</scope>
    <source>
        <strain>NBRC 101917 / NGR234</strain>
    </source>
</reference>
<reference key="2">
    <citation type="journal article" date="2009" name="Appl. Environ. Microbiol.">
        <title>Rhizobium sp. strain NGR234 possesses a remarkable number of secretion systems.</title>
        <authorList>
            <person name="Schmeisser C."/>
            <person name="Liesegang H."/>
            <person name="Krysciak D."/>
            <person name="Bakkou N."/>
            <person name="Le Quere A."/>
            <person name="Wollherr A."/>
            <person name="Heinemeyer I."/>
            <person name="Morgenstern B."/>
            <person name="Pommerening-Roeser A."/>
            <person name="Flores M."/>
            <person name="Palacios R."/>
            <person name="Brenner S."/>
            <person name="Gottschalk G."/>
            <person name="Schmitz R.A."/>
            <person name="Broughton W.J."/>
            <person name="Perret X."/>
            <person name="Strittmatter A.W."/>
            <person name="Streit W.R."/>
        </authorList>
    </citation>
    <scope>NUCLEOTIDE SEQUENCE [LARGE SCALE GENOMIC DNA]</scope>
    <source>
        <strain>NBRC 101917 / NGR234</strain>
    </source>
</reference>
<organism>
    <name type="scientific">Sinorhizobium fredii (strain NBRC 101917 / NGR234)</name>
    <dbReference type="NCBI Taxonomy" id="394"/>
    <lineage>
        <taxon>Bacteria</taxon>
        <taxon>Pseudomonadati</taxon>
        <taxon>Pseudomonadota</taxon>
        <taxon>Alphaproteobacteria</taxon>
        <taxon>Hyphomicrobiales</taxon>
        <taxon>Rhizobiaceae</taxon>
        <taxon>Sinorhizobium/Ensifer group</taxon>
        <taxon>Sinorhizobium</taxon>
    </lineage>
</organism>
<sequence>MVKNFLGSSVTSGSAGAEHGKTLQIPTLRWVRQSKTSIMALVICLGRIVKTALVTGGSGYFGELLSKQLLRQGTYVRVFDLNPPGFSHPNLEFLKGTILDRNAVRQALSGIDKVFHNVAQVPLAKEKDLFWSVNCGGTQIIVDESVATGIEKFVYTSSSAVFGAPKSNPVTEETEPNPAEDYGRAKLAGEIICKEAMQRDGLDVAIVRPRTVLGYGRQGVVQILFDWVERGLDIPVLGGGNNKYQFVHSDDLASACIAASNVKGFATYNIGAAEFGTMRELLQVVIKHAETGSRIKSIPMGPTALAANLASALGLSPLGPYHSLMYGRAMYFDISKAQKELGYAPRYSNSQMMIETYNWYQANRASLGKGGGSRHKAPVKQQLLALLPYALRLIPG</sequence>
<protein>
    <recommendedName>
        <fullName>Uncharacterized protein y4nG</fullName>
    </recommendedName>
</protein>
<feature type="chain" id="PRO_0000200916" description="Uncharacterized protein y4nG">
    <location>
        <begin position="1"/>
        <end position="396"/>
    </location>
</feature>